<evidence type="ECO:0000250" key="1">
    <source>
        <dbReference type="UniProtKB" id="P01946"/>
    </source>
</evidence>
<evidence type="ECO:0000250" key="2">
    <source>
        <dbReference type="UniProtKB" id="P69905"/>
    </source>
</evidence>
<evidence type="ECO:0000255" key="3">
    <source>
        <dbReference type="PROSITE-ProRule" id="PRU00238"/>
    </source>
</evidence>
<evidence type="ECO:0000269" key="4">
    <source>
    </source>
</evidence>
<evidence type="ECO:0000269" key="5">
    <source>
    </source>
</evidence>
<evidence type="ECO:0000269" key="6">
    <source>
    </source>
</evidence>
<evidence type="ECO:0000269" key="7">
    <source ref="9"/>
</evidence>
<evidence type="ECO:0007744" key="8">
    <source>
    </source>
</evidence>
<evidence type="ECO:0007744" key="9">
    <source>
    </source>
</evidence>
<evidence type="ECO:0007829" key="10">
    <source>
        <dbReference type="PDB" id="3HRW"/>
    </source>
</evidence>
<reference key="1">
    <citation type="journal article" date="1979" name="Cell">
        <title>The complete sequence of a chromosomal mouse alpha-globin gene reveals elements conserved throughout vertebrate evolution.</title>
        <authorList>
            <person name="Nishioka Y."/>
            <person name="Leder P."/>
        </authorList>
    </citation>
    <scope>NUCLEOTIDE SEQUENCE</scope>
    <source>
        <strain>BALB/cJ</strain>
    </source>
</reference>
<reference key="2">
    <citation type="journal article" date="1967" name="J. Mol. Biol.">
        <title>Hemoglobins of mice: sequence and possible ambiguity at one position of the alpha chain.</title>
        <authorList>
            <person name="Popp R.A."/>
        </authorList>
    </citation>
    <scope>PROTEIN SEQUENCE OF 2-142</scope>
    <source>
        <strain>BALB/cJ</strain>
        <strain>C57BL/6J</strain>
        <strain>NB</strain>
    </source>
</reference>
<reference key="3">
    <citation type="submission" date="2007-04" db="UniProtKB">
        <authorList>
            <person name="Lubec G."/>
            <person name="Klug S."/>
            <person name="Kang S.U."/>
        </authorList>
    </citation>
    <scope>PROTEIN SEQUENCE OF 18-57; 94-100 AND 129-140</scope>
    <scope>IDENTIFICATION BY MASS SPECTROMETRY</scope>
    <source>
        <strain>C57BL/6J</strain>
        <tissue>Brain</tissue>
        <tissue>Hippocampus</tissue>
    </source>
</reference>
<reference key="4">
    <citation type="journal article" date="1978" name="Proc. Natl. Acad. Sci. U.S.A.">
        <title>Comparison of cloned mouse alpha- and beta-globin genes: conservation of intervening sequence locations and extragenic homology.</title>
        <authorList>
            <person name="Leder A."/>
            <person name="Miller H.I."/>
            <person name="Hamer D.H."/>
            <person name="Seidman J.G."/>
            <person name="Norman B."/>
            <person name="Sullivan M."/>
            <person name="Leder P."/>
        </authorList>
    </citation>
    <scope>NUCLEOTIDE SEQUENCE [GENOMIC DNA] OF 76-99</scope>
</reference>
<reference key="5">
    <citation type="journal article" date="1978" name="Cold Spring Harb. Symp. Quant. Biol.">
        <title>Characterization and kinetics of synthesis of 15S beta-globin RNA, a putative precursor of beta-globin mRNA.</title>
        <authorList>
            <person name="Curtis P.J."/>
            <person name="Mantei N."/>
            <person name="Weissmann C."/>
        </authorList>
    </citation>
    <scope>NUCLEOTIDE SEQUENCE OF 84-109</scope>
</reference>
<reference key="6">
    <citation type="journal article" date="2010" name="Cell">
        <title>A tissue-specific atlas of mouse protein phosphorylation and expression.</title>
        <authorList>
            <person name="Huttlin E.L."/>
            <person name="Jedrychowski M.P."/>
            <person name="Elias J.E."/>
            <person name="Goswami T."/>
            <person name="Rad R."/>
            <person name="Beausoleil S.A."/>
            <person name="Villen J."/>
            <person name="Haas W."/>
            <person name="Sowa M.E."/>
            <person name="Gygi S.P."/>
        </authorList>
    </citation>
    <scope>PHOSPHORYLATION [LARGE SCALE ANALYSIS] AT TYR-25; SER-103; THR-109; SER-112; SER-125; SER-132; THR-135; THR-138 AND SER-139</scope>
    <scope>VARIANT [LARGE SCALE ANALYSIS] ASN-69</scope>
    <scope>IDENTIFICATION BY MASS SPECTROMETRY [LARGE SCALE ANALYSIS]</scope>
    <source>
        <tissue>Brain</tissue>
        <tissue>Brown adipose tissue</tissue>
        <tissue>Heart</tissue>
        <tissue>Kidney</tissue>
        <tissue>Liver</tissue>
        <tissue>Lung</tissue>
        <tissue>Pancreas</tissue>
        <tissue>Spleen</tissue>
        <tissue>Testis</tissue>
    </source>
</reference>
<reference key="7">
    <citation type="journal article" date="2013" name="Mol. Cell">
        <title>SIRT5-mediated lysine desuccinylation impacts diverse metabolic pathways.</title>
        <authorList>
            <person name="Park J."/>
            <person name="Chen Y."/>
            <person name="Tishkoff D.X."/>
            <person name="Peng C."/>
            <person name="Tan M."/>
            <person name="Dai L."/>
            <person name="Xie Z."/>
            <person name="Zhang Y."/>
            <person name="Zwaans B.M."/>
            <person name="Skinner M.E."/>
            <person name="Lombard D.B."/>
            <person name="Zhao Y."/>
        </authorList>
    </citation>
    <scope>SUCCINYLATION [LARGE SCALE ANALYSIS] AT LYS-8; LYS-12; LYS-17 AND LYS-41</scope>
    <scope>IDENTIFICATION BY MASS SPECTROMETRY [LARGE SCALE ANALYSIS]</scope>
    <source>
        <tissue>Liver</tissue>
    </source>
</reference>
<reference key="8">
    <citation type="journal article" date="1969" name="J. Hered.">
        <title>Studies on the mouse hemoglobin loci. 8. A fourth alpha-chain phenotype.</title>
        <authorList>
            <person name="Popp R.A."/>
        </authorList>
    </citation>
    <scope>VARIANTS VAL-26; ILE-63; ASN-69; THR-69 AND ALA-79</scope>
</reference>
<reference key="9">
    <citation type="book" date="1979" name="Inbred and genetically defined strains of laboratory animals">
        <editorList>
            <person name="Altman P.A."/>
            <person name="Katz D.D."/>
        </editorList>
        <authorList>
            <person name="Popp R.A."/>
        </authorList>
    </citation>
    <scope>VARIANTS VAL-26; ILE-63; ASN-69; THR-69 AND ALA-79</scope>
</reference>
<reference key="10">
    <citation type="journal article" date="1982" name="Biochem. Genet.">
        <title>The primary structure of genetic variants of mouse hemoglobin.</title>
        <authorList>
            <person name="Popp R.A."/>
            <person name="Bailiff E.G."/>
            <person name="Skow L.C."/>
            <person name="Whitney J.B. III"/>
        </authorList>
    </citation>
    <scope>VARIANTS VAL-26; ILE-63; ASN-69; THR-69 AND ALA-79</scope>
</reference>
<protein>
    <recommendedName>
        <fullName>Hemoglobin subunit alpha</fullName>
    </recommendedName>
    <alternativeName>
        <fullName>Alpha-globin</fullName>
    </alternativeName>
    <alternativeName>
        <fullName>Hemoglobin alpha chain</fullName>
    </alternativeName>
    <component>
        <recommendedName>
            <fullName evidence="1">Hemopressin</fullName>
        </recommendedName>
    </component>
</protein>
<proteinExistence type="evidence at protein level"/>
<accession>P01942</accession>
<feature type="initiator methionine" description="Removed" evidence="4">
    <location>
        <position position="1"/>
    </location>
</feature>
<feature type="chain" id="PRO_0000052694" description="Hemoglobin subunit alpha">
    <location>
        <begin position="2"/>
        <end position="142"/>
    </location>
</feature>
<feature type="peptide" id="PRO_0000455906" description="Hemopressin" evidence="1">
    <location>
        <begin position="96"/>
        <end position="104"/>
    </location>
</feature>
<feature type="domain" description="Globin" evidence="3">
    <location>
        <begin position="2"/>
        <end position="142"/>
    </location>
</feature>
<feature type="binding site" evidence="3">
    <location>
        <position position="59"/>
    </location>
    <ligand>
        <name>O2</name>
        <dbReference type="ChEBI" id="CHEBI:15379"/>
    </ligand>
</feature>
<feature type="binding site" description="proximal binding residue" evidence="3">
    <location>
        <position position="88"/>
    </location>
    <ligand>
        <name>heme b</name>
        <dbReference type="ChEBI" id="CHEBI:60344"/>
    </ligand>
    <ligandPart>
        <name>Fe</name>
        <dbReference type="ChEBI" id="CHEBI:18248"/>
    </ligandPart>
</feature>
<feature type="modified residue" description="Phosphoserine" evidence="2">
    <location>
        <position position="4"/>
    </location>
</feature>
<feature type="modified residue" description="N6-succinyllysine" evidence="9">
    <location>
        <position position="8"/>
    </location>
</feature>
<feature type="modified residue" description="N6-succinyllysine" evidence="9">
    <location>
        <position position="12"/>
    </location>
</feature>
<feature type="modified residue" description="N6-acetyllysine; alternate" evidence="2">
    <location>
        <position position="17"/>
    </location>
</feature>
<feature type="modified residue" description="N6-succinyllysine; alternate" evidence="9">
    <location>
        <position position="17"/>
    </location>
</feature>
<feature type="modified residue" description="Phosphotyrosine" evidence="8">
    <location>
        <position position="25"/>
    </location>
</feature>
<feature type="modified residue" description="Phosphoserine" evidence="2">
    <location>
        <position position="36"/>
    </location>
</feature>
<feature type="modified residue" description="N6-succinyllysine" evidence="9">
    <location>
        <position position="41"/>
    </location>
</feature>
<feature type="modified residue" description="Phosphoserine" evidence="2">
    <location>
        <position position="50"/>
    </location>
</feature>
<feature type="modified residue" description="Phosphoserine" evidence="8">
    <location>
        <position position="103"/>
    </location>
</feature>
<feature type="modified residue" description="Phosphothreonine" evidence="8">
    <location>
        <position position="109"/>
    </location>
</feature>
<feature type="modified residue" description="Phosphoserine" evidence="8">
    <location>
        <position position="112"/>
    </location>
</feature>
<feature type="modified residue" description="Phosphoserine" evidence="8">
    <location>
        <position position="125"/>
    </location>
</feature>
<feature type="modified residue" description="Phosphoserine" evidence="8">
    <location>
        <position position="132"/>
    </location>
</feature>
<feature type="modified residue" description="Phosphothreonine" evidence="8">
    <location>
        <position position="135"/>
    </location>
</feature>
<feature type="modified residue" description="Phosphothreonine" evidence="8">
    <location>
        <position position="138"/>
    </location>
</feature>
<feature type="modified residue" description="Phosphoserine" evidence="8">
    <location>
        <position position="139"/>
    </location>
</feature>
<feature type="sequence variant" description="In allele chain C(1) and in strain: NB." evidence="5 6 7">
    <original>G</original>
    <variation>V</variation>
    <location>
        <position position="26"/>
    </location>
</feature>
<feature type="sequence variant" description="In allele chain C(1) and in strain: NB." evidence="5 6 7">
    <original>V</original>
    <variation>I</variation>
    <location>
        <position position="63"/>
    </location>
</feature>
<feature type="sequence variant" description="In allele chains A, C(2), D(2), F, G(1) and G(2) and in strain: C57BL." evidence="5 6 7 8">
    <original>S</original>
    <variation>N</variation>
    <location>
        <position position="69"/>
    </location>
</feature>
<feature type="sequence variant" description="In allele chain B(2) and in 1 BALB/C strain sequence." evidence="5 6 7">
    <original>S</original>
    <variation>T</variation>
    <location>
        <position position="69"/>
    </location>
</feature>
<feature type="sequence variant" description="In allele chains F and G(2)." evidence="5 6 7">
    <original>G</original>
    <variation>A</variation>
    <location>
        <position position="79"/>
    </location>
</feature>
<feature type="helix" evidence="10">
    <location>
        <begin position="6"/>
        <end position="17"/>
    </location>
</feature>
<feature type="helix" evidence="10">
    <location>
        <begin position="19"/>
        <end position="21"/>
    </location>
</feature>
<feature type="helix" evidence="10">
    <location>
        <begin position="22"/>
        <end position="36"/>
    </location>
</feature>
<feature type="helix" evidence="10">
    <location>
        <begin position="39"/>
        <end position="43"/>
    </location>
</feature>
<feature type="strand" evidence="10">
    <location>
        <begin position="45"/>
        <end position="47"/>
    </location>
</feature>
<feature type="helix" evidence="10">
    <location>
        <begin position="54"/>
        <end position="70"/>
    </location>
</feature>
<feature type="turn" evidence="10">
    <location>
        <begin position="78"/>
        <end position="80"/>
    </location>
</feature>
<feature type="helix" evidence="10">
    <location>
        <begin position="84"/>
        <end position="89"/>
    </location>
</feature>
<feature type="helix" evidence="10">
    <location>
        <begin position="97"/>
        <end position="113"/>
    </location>
</feature>
<feature type="turn" evidence="10">
    <location>
        <begin position="115"/>
        <end position="117"/>
    </location>
</feature>
<feature type="helix" evidence="10">
    <location>
        <begin position="120"/>
        <end position="137"/>
    </location>
</feature>
<feature type="helix" evidence="10">
    <location>
        <begin position="138"/>
        <end position="141"/>
    </location>
</feature>
<name>HBA_MOUSE</name>
<keyword id="KW-0002">3D-structure</keyword>
<keyword id="KW-0007">Acetylation</keyword>
<keyword id="KW-0903">Direct protein sequencing</keyword>
<keyword id="KW-0349">Heme</keyword>
<keyword id="KW-0408">Iron</keyword>
<keyword id="KW-0479">Metal-binding</keyword>
<keyword id="KW-0561">Oxygen transport</keyword>
<keyword id="KW-0597">Phosphoprotein</keyword>
<keyword id="KW-1185">Reference proteome</keyword>
<keyword id="KW-0813">Transport</keyword>
<organism>
    <name type="scientific">Mus musculus</name>
    <name type="common">Mouse</name>
    <dbReference type="NCBI Taxonomy" id="10090"/>
    <lineage>
        <taxon>Eukaryota</taxon>
        <taxon>Metazoa</taxon>
        <taxon>Chordata</taxon>
        <taxon>Craniata</taxon>
        <taxon>Vertebrata</taxon>
        <taxon>Euteleostomi</taxon>
        <taxon>Mammalia</taxon>
        <taxon>Eutheria</taxon>
        <taxon>Euarchontoglires</taxon>
        <taxon>Glires</taxon>
        <taxon>Rodentia</taxon>
        <taxon>Myomorpha</taxon>
        <taxon>Muroidea</taxon>
        <taxon>Muridae</taxon>
        <taxon>Murinae</taxon>
        <taxon>Mus</taxon>
        <taxon>Mus</taxon>
    </lineage>
</organism>
<sequence length="142" mass="15085">MVLSGEDKSNIKAAWGKIGGHGAEYGAEALERMFASFPTTKTYFPHFDVSHGSAQVKGHGKKVADALASAAGHLDDLPGALSALSDLHAHKLRVDPVNFKLLSHCLLVTLASHHPADFTPAVHASLDKFLASVSTVLTSKYR</sequence>
<comment type="function">
    <text>Involved in oxygen transport from the lung to the various peripheral tissues.</text>
</comment>
<comment type="function">
    <molecule>Hemopressin</molecule>
    <text evidence="1">Hemopressin acts as an antagonist peptide of the cannabinoid receptor CNR1. Hemopressin-binding efficiently blocks cannabinoid receptor CNR1 and subsequent signaling.</text>
</comment>
<comment type="subunit">
    <text>Heterotetramer of two alpha chains and two beta chains.</text>
</comment>
<comment type="tissue specificity">
    <text>Red blood cells.</text>
</comment>
<comment type="polymorphism">
    <text evidence="6">In inbred mouse strains there are at least 6 alleles that can occur at the HBA locus: A, B, C, D, F, or G. Strains carrying the A and F alleles produce a single kind of alpha chain, whereas those carrying B, C, D, or G each produce 2 kinds of chains. The sequence shown is that of the B(1) and D(1) allele chains.</text>
</comment>
<comment type="similarity">
    <text evidence="3">Belongs to the globin family.</text>
</comment>
<dbReference type="EMBL" id="V00714">
    <property type="protein sequence ID" value="CAA24095.1"/>
    <property type="molecule type" value="Genomic_DNA"/>
</dbReference>
<dbReference type="EMBL" id="M10703">
    <property type="protein sequence ID" value="AAA37782.2"/>
    <property type="molecule type" value="Genomic_DNA"/>
</dbReference>
<dbReference type="EMBL" id="M10840">
    <property type="protein sequence ID" value="AAA37784.1"/>
    <property type="molecule type" value="mRNA"/>
</dbReference>
<dbReference type="CCDS" id="CCDS24523.1"/>
<dbReference type="PIR" id="A90791">
    <property type="entry name" value="HAMS"/>
</dbReference>
<dbReference type="PDB" id="3HRW">
    <property type="method" value="X-ray"/>
    <property type="resolution" value="2.80 A"/>
    <property type="chains" value="A/C=2-142"/>
</dbReference>
<dbReference type="PDBsum" id="3HRW"/>
<dbReference type="SMR" id="P01942"/>
<dbReference type="ComplexPortal" id="CPX-2922">
    <property type="entry name" value="Hemoglobin HbA complex, variant HBB1"/>
</dbReference>
<dbReference type="ComplexPortal" id="CPX-2924">
    <property type="entry name" value="Hemoglobin HbA complex, variant HBB2"/>
</dbReference>
<dbReference type="DIP" id="DIP-34118N"/>
<dbReference type="FunCoup" id="P01942">
    <property type="interactions" value="16"/>
</dbReference>
<dbReference type="IntAct" id="P01942">
    <property type="interactions" value="12"/>
</dbReference>
<dbReference type="MINT" id="P01942"/>
<dbReference type="STRING" id="10090.ENSMUSP00000090895"/>
<dbReference type="GlyGen" id="P01942">
    <property type="glycosylation" value="2 sites, 1 O-linked glycan (2 sites)"/>
</dbReference>
<dbReference type="iPTMnet" id="P01942"/>
<dbReference type="PhosphoSitePlus" id="P01942"/>
<dbReference type="SwissPalm" id="P01942"/>
<dbReference type="REPRODUCTION-2DPAGE" id="IPI00469114"/>
<dbReference type="REPRODUCTION-2DPAGE" id="P01942"/>
<dbReference type="CPTAC" id="non-CPTAC-3573"/>
<dbReference type="jPOST" id="P01942"/>
<dbReference type="PaxDb" id="10090-ENSMUSP00000090895"/>
<dbReference type="PeptideAtlas" id="P01942"/>
<dbReference type="ProteomicsDB" id="269719"/>
<dbReference type="Pumba" id="P01942"/>
<dbReference type="AGR" id="MGI:96015"/>
<dbReference type="MGI" id="MGI:96015">
    <property type="gene designation" value="Hba-a1"/>
</dbReference>
<dbReference type="eggNOG" id="KOG3378">
    <property type="taxonomic scope" value="Eukaryota"/>
</dbReference>
<dbReference type="InParanoid" id="P01942"/>
<dbReference type="PhylomeDB" id="P01942"/>
<dbReference type="Reactome" id="R-MMU-1237044">
    <property type="pathway name" value="Erythrocytes take up carbon dioxide and release oxygen"/>
</dbReference>
<dbReference type="Reactome" id="R-MMU-1247673">
    <property type="pathway name" value="Erythrocytes take up oxygen and release carbon dioxide"/>
</dbReference>
<dbReference type="Reactome" id="R-MMU-2168880">
    <property type="pathway name" value="Scavenging of heme from plasma"/>
</dbReference>
<dbReference type="Reactome" id="R-MMU-9707564">
    <property type="pathway name" value="Cytoprotection by HMOX1"/>
</dbReference>
<dbReference type="Reactome" id="R-MMU-9707616">
    <property type="pathway name" value="Heme signaling"/>
</dbReference>
<dbReference type="ChiTaRS" id="Hba-a1">
    <property type="organism name" value="mouse"/>
</dbReference>
<dbReference type="EvolutionaryTrace" id="P01942"/>
<dbReference type="PRO" id="PR:P01942"/>
<dbReference type="Proteomes" id="UP000000589">
    <property type="component" value="Unplaced"/>
</dbReference>
<dbReference type="RNAct" id="P01942">
    <property type="molecule type" value="protein"/>
</dbReference>
<dbReference type="GO" id="GO:0005833">
    <property type="term" value="C:hemoglobin complex"/>
    <property type="evidence" value="ECO:0000353"/>
    <property type="project" value="ComplexPortal"/>
</dbReference>
<dbReference type="GO" id="GO:0043209">
    <property type="term" value="C:myelin sheath"/>
    <property type="evidence" value="ECO:0007005"/>
    <property type="project" value="UniProtKB"/>
</dbReference>
<dbReference type="GO" id="GO:0020037">
    <property type="term" value="F:heme binding"/>
    <property type="evidence" value="ECO:0007669"/>
    <property type="project" value="InterPro"/>
</dbReference>
<dbReference type="GO" id="GO:0005506">
    <property type="term" value="F:iron ion binding"/>
    <property type="evidence" value="ECO:0007669"/>
    <property type="project" value="InterPro"/>
</dbReference>
<dbReference type="GO" id="GO:0019825">
    <property type="term" value="F:oxygen binding"/>
    <property type="evidence" value="ECO:0007669"/>
    <property type="project" value="InterPro"/>
</dbReference>
<dbReference type="GO" id="GO:0005344">
    <property type="term" value="F:oxygen carrier activity"/>
    <property type="evidence" value="ECO:0007669"/>
    <property type="project" value="UniProtKB-KW"/>
</dbReference>
<dbReference type="GO" id="GO:0015670">
    <property type="term" value="P:carbon dioxide transport"/>
    <property type="evidence" value="ECO:0000303"/>
    <property type="project" value="ComplexPortal"/>
</dbReference>
<dbReference type="GO" id="GO:0048821">
    <property type="term" value="P:erythrocyte development"/>
    <property type="evidence" value="ECO:0000316"/>
    <property type="project" value="MGI"/>
</dbReference>
<dbReference type="GO" id="GO:0001701">
    <property type="term" value="P:in utero embryonic development"/>
    <property type="evidence" value="ECO:0000316"/>
    <property type="project" value="MGI"/>
</dbReference>
<dbReference type="GO" id="GO:0030185">
    <property type="term" value="P:nitric oxide transport"/>
    <property type="evidence" value="ECO:0000266"/>
    <property type="project" value="ComplexPortal"/>
</dbReference>
<dbReference type="GO" id="GO:0015671">
    <property type="term" value="P:oxygen transport"/>
    <property type="evidence" value="ECO:0000266"/>
    <property type="project" value="ComplexPortal"/>
</dbReference>
<dbReference type="GO" id="GO:0009617">
    <property type="term" value="P:response to bacterium"/>
    <property type="evidence" value="ECO:0000270"/>
    <property type="project" value="MGI"/>
</dbReference>
<dbReference type="GO" id="GO:0035634">
    <property type="term" value="P:response to stilbenoid"/>
    <property type="evidence" value="ECO:0000270"/>
    <property type="project" value="UniProtKB"/>
</dbReference>
<dbReference type="CDD" id="cd08927">
    <property type="entry name" value="Hb-alpha-like"/>
    <property type="match status" value="1"/>
</dbReference>
<dbReference type="FunFam" id="1.10.490.10:FF:000002">
    <property type="entry name" value="Hemoglobin subunit alpha"/>
    <property type="match status" value="1"/>
</dbReference>
<dbReference type="Gene3D" id="1.10.490.10">
    <property type="entry name" value="Globins"/>
    <property type="match status" value="1"/>
</dbReference>
<dbReference type="InterPro" id="IPR000971">
    <property type="entry name" value="Globin"/>
</dbReference>
<dbReference type="InterPro" id="IPR009050">
    <property type="entry name" value="Globin-like_sf"/>
</dbReference>
<dbReference type="InterPro" id="IPR012292">
    <property type="entry name" value="Globin/Proto"/>
</dbReference>
<dbReference type="InterPro" id="IPR002338">
    <property type="entry name" value="Hemoglobin_a-typ"/>
</dbReference>
<dbReference type="InterPro" id="IPR050056">
    <property type="entry name" value="Hemoglobin_oxygen_transport"/>
</dbReference>
<dbReference type="InterPro" id="IPR002339">
    <property type="entry name" value="Hemoglobin_pi"/>
</dbReference>
<dbReference type="PANTHER" id="PTHR11442">
    <property type="entry name" value="HEMOGLOBIN FAMILY MEMBER"/>
    <property type="match status" value="1"/>
</dbReference>
<dbReference type="PANTHER" id="PTHR11442:SF48">
    <property type="entry name" value="HEMOGLOBIN SUBUNIT ALPHA"/>
    <property type="match status" value="1"/>
</dbReference>
<dbReference type="Pfam" id="PF00042">
    <property type="entry name" value="Globin"/>
    <property type="match status" value="1"/>
</dbReference>
<dbReference type="PRINTS" id="PR00612">
    <property type="entry name" value="ALPHAHAEM"/>
</dbReference>
<dbReference type="PRINTS" id="PR00815">
    <property type="entry name" value="PIHAEM"/>
</dbReference>
<dbReference type="SUPFAM" id="SSF46458">
    <property type="entry name" value="Globin-like"/>
    <property type="match status" value="1"/>
</dbReference>
<dbReference type="PROSITE" id="PS01033">
    <property type="entry name" value="GLOBIN"/>
    <property type="match status" value="1"/>
</dbReference>
<gene>
    <name type="primary">Hba</name>
    <name type="synonym">Hba-a1</name>
</gene>